<sequence>MLKLSFRSLTSRLPRLSTLVVRGYASVANTGIEASNTSENNLNIQEQLNDNDKKRLKQIRNIGISAHIDSGKTTFTERVLYYTGRIKDIHEVRGKDNVGAKMDFMELEREKGITIQSAATHCTWERTVDQIEANEKQKTDFEKSYNINIIDTPGHIDFTIEVERALRVLDGAVLVLCAVSGVQSQTITVDRQMRRYNVPRISFVNKMDRMGADPWKVIQQINTKLKIPAAAVQIPIGQEDKLEGVVDLIQMRAIYNRGSKGEKIEISQQVPENLIELAKEKRSALIEKLADLDEEIADIYVMEEDPTPEQLMGAIRRTTLARKFTPVLMGSALSNVGVQSVLDAVCDYLPNPSEVENIALNAADSEKPVSLVPSSEKPLVALAFKLEEGRFGQLTYLRIYQGTLKRGNYIYNVNSTKKIKVSRLVRMHSNDMEEIEKVEAGGICALFGIECASGDTFTDGSVSYTMTSMFVPEPVISLSLKPKSKDTTSFSKALNRFQREDPTFRVQLDNESKETIISGMGELHLEVYVERMRREYKVDCETGKPRVAFRETLSKKVPFSYLHKKQSGGAGQYAKVEGYIEYMDGVEDESGNVVDCEFINKVTGGTVPTQYIPACEKAFYEALKKGFLIGHPIKNCRFVLEDGAYHPVDSSELAFRLATISAFRTAFLQANPMVLEPIMNVSITAPVEHQGGVIGNLDKRKATIVDSDTDEDEFTLQAEVPLNSMFSYSSDIRALTKGKGEFSMEFLKYLPAPKYVQKELVDAYNKQQQK</sequence>
<organism>
    <name type="scientific">Schizosaccharomyces pombe (strain 972 / ATCC 24843)</name>
    <name type="common">Fission yeast</name>
    <dbReference type="NCBI Taxonomy" id="284812"/>
    <lineage>
        <taxon>Eukaryota</taxon>
        <taxon>Fungi</taxon>
        <taxon>Dikarya</taxon>
        <taxon>Ascomycota</taxon>
        <taxon>Taphrinomycotina</taxon>
        <taxon>Schizosaccharomycetes</taxon>
        <taxon>Schizosaccharomycetales</taxon>
        <taxon>Schizosaccharomycetaceae</taxon>
        <taxon>Schizosaccharomyces</taxon>
    </lineage>
</organism>
<keyword id="KW-0251">Elongation factor</keyword>
<keyword id="KW-0342">GTP-binding</keyword>
<keyword id="KW-0496">Mitochondrion</keyword>
<keyword id="KW-0547">Nucleotide-binding</keyword>
<keyword id="KW-0648">Protein biosynthesis</keyword>
<keyword id="KW-1185">Reference proteome</keyword>
<keyword id="KW-0809">Transit peptide</keyword>
<comment type="function">
    <text evidence="1">Mitochondrial GTPase that catalyzes the GTP-dependent ribosomal translocation step during translation elongation. During this step, the ribosome changes from the pre-translocational (PRE) to the post-translocational (POST) state as the newly formed A-site-bound peptidyl-tRNA and P-site-bound deacylated tRNA move to the P and E sites, respectively. Catalyzes the coordinated movement of the two tRNA molecules, the mRNA and conformational changes in the ribosome.</text>
</comment>
<comment type="pathway">
    <text evidence="1">Protein biosynthesis; polypeptide chain elongation.</text>
</comment>
<comment type="subcellular location">
    <subcellularLocation>
        <location evidence="1 2">Mitochondrion</location>
    </subcellularLocation>
</comment>
<comment type="similarity">
    <text evidence="3">Belongs to the TRAFAC class translation factor GTPase superfamily. Classic translation factor GTPase family. EF-G/EF-2 subfamily.</text>
</comment>
<proteinExistence type="inferred from homology"/>
<feature type="transit peptide" description="Mitochondrion" evidence="1">
    <location>
        <begin position="1"/>
        <end position="24"/>
    </location>
</feature>
<feature type="chain" id="PRO_0000007448" description="Elongation factor G, mitochondrial">
    <location>
        <begin position="25"/>
        <end position="770"/>
    </location>
</feature>
<feature type="domain" description="tr-type G">
    <location>
        <begin position="57"/>
        <end position="353"/>
    </location>
</feature>
<feature type="binding site" evidence="1">
    <location>
        <begin position="66"/>
        <end position="73"/>
    </location>
    <ligand>
        <name>GTP</name>
        <dbReference type="ChEBI" id="CHEBI:37565"/>
    </ligand>
</feature>
<feature type="binding site" evidence="1">
    <location>
        <begin position="151"/>
        <end position="155"/>
    </location>
    <ligand>
        <name>GTP</name>
        <dbReference type="ChEBI" id="CHEBI:37565"/>
    </ligand>
</feature>
<feature type="binding site" evidence="1">
    <location>
        <begin position="205"/>
        <end position="208"/>
    </location>
    <ligand>
        <name>GTP</name>
        <dbReference type="ChEBI" id="CHEBI:37565"/>
    </ligand>
</feature>
<reference key="1">
    <citation type="journal article" date="2002" name="Nature">
        <title>The genome sequence of Schizosaccharomyces pombe.</title>
        <authorList>
            <person name="Wood V."/>
            <person name="Gwilliam R."/>
            <person name="Rajandream M.A."/>
            <person name="Lyne M.H."/>
            <person name="Lyne R."/>
            <person name="Stewart A."/>
            <person name="Sgouros J.G."/>
            <person name="Peat N."/>
            <person name="Hayles J."/>
            <person name="Baker S.G."/>
            <person name="Basham D."/>
            <person name="Bowman S."/>
            <person name="Brooks K."/>
            <person name="Brown D."/>
            <person name="Brown S."/>
            <person name="Chillingworth T."/>
            <person name="Churcher C.M."/>
            <person name="Collins M."/>
            <person name="Connor R."/>
            <person name="Cronin A."/>
            <person name="Davis P."/>
            <person name="Feltwell T."/>
            <person name="Fraser A."/>
            <person name="Gentles S."/>
            <person name="Goble A."/>
            <person name="Hamlin N."/>
            <person name="Harris D.E."/>
            <person name="Hidalgo J."/>
            <person name="Hodgson G."/>
            <person name="Holroyd S."/>
            <person name="Hornsby T."/>
            <person name="Howarth S."/>
            <person name="Huckle E.J."/>
            <person name="Hunt S."/>
            <person name="Jagels K."/>
            <person name="James K.D."/>
            <person name="Jones L."/>
            <person name="Jones M."/>
            <person name="Leather S."/>
            <person name="McDonald S."/>
            <person name="McLean J."/>
            <person name="Mooney P."/>
            <person name="Moule S."/>
            <person name="Mungall K.L."/>
            <person name="Murphy L.D."/>
            <person name="Niblett D."/>
            <person name="Odell C."/>
            <person name="Oliver K."/>
            <person name="O'Neil S."/>
            <person name="Pearson D."/>
            <person name="Quail M.A."/>
            <person name="Rabbinowitsch E."/>
            <person name="Rutherford K.M."/>
            <person name="Rutter S."/>
            <person name="Saunders D."/>
            <person name="Seeger K."/>
            <person name="Sharp S."/>
            <person name="Skelton J."/>
            <person name="Simmonds M.N."/>
            <person name="Squares R."/>
            <person name="Squares S."/>
            <person name="Stevens K."/>
            <person name="Taylor K."/>
            <person name="Taylor R.G."/>
            <person name="Tivey A."/>
            <person name="Walsh S.V."/>
            <person name="Warren T."/>
            <person name="Whitehead S."/>
            <person name="Woodward J.R."/>
            <person name="Volckaert G."/>
            <person name="Aert R."/>
            <person name="Robben J."/>
            <person name="Grymonprez B."/>
            <person name="Weltjens I."/>
            <person name="Vanstreels E."/>
            <person name="Rieger M."/>
            <person name="Schaefer M."/>
            <person name="Mueller-Auer S."/>
            <person name="Gabel C."/>
            <person name="Fuchs M."/>
            <person name="Duesterhoeft A."/>
            <person name="Fritzc C."/>
            <person name="Holzer E."/>
            <person name="Moestl D."/>
            <person name="Hilbert H."/>
            <person name="Borzym K."/>
            <person name="Langer I."/>
            <person name="Beck A."/>
            <person name="Lehrach H."/>
            <person name="Reinhardt R."/>
            <person name="Pohl T.M."/>
            <person name="Eger P."/>
            <person name="Zimmermann W."/>
            <person name="Wedler H."/>
            <person name="Wambutt R."/>
            <person name="Purnelle B."/>
            <person name="Goffeau A."/>
            <person name="Cadieu E."/>
            <person name="Dreano S."/>
            <person name="Gloux S."/>
            <person name="Lelaure V."/>
            <person name="Mottier S."/>
            <person name="Galibert F."/>
            <person name="Aves S.J."/>
            <person name="Xiang Z."/>
            <person name="Hunt C."/>
            <person name="Moore K."/>
            <person name="Hurst S.M."/>
            <person name="Lucas M."/>
            <person name="Rochet M."/>
            <person name="Gaillardin C."/>
            <person name="Tallada V.A."/>
            <person name="Garzon A."/>
            <person name="Thode G."/>
            <person name="Daga R.R."/>
            <person name="Cruzado L."/>
            <person name="Jimenez J."/>
            <person name="Sanchez M."/>
            <person name="del Rey F."/>
            <person name="Benito J."/>
            <person name="Dominguez A."/>
            <person name="Revuelta J.L."/>
            <person name="Moreno S."/>
            <person name="Armstrong J."/>
            <person name="Forsburg S.L."/>
            <person name="Cerutti L."/>
            <person name="Lowe T."/>
            <person name="McCombie W.R."/>
            <person name="Paulsen I."/>
            <person name="Potashkin J."/>
            <person name="Shpakovski G.V."/>
            <person name="Ussery D."/>
            <person name="Barrell B.G."/>
            <person name="Nurse P."/>
        </authorList>
    </citation>
    <scope>NUCLEOTIDE SEQUENCE [LARGE SCALE GENOMIC DNA]</scope>
    <source>
        <strain>972 / ATCC 24843</strain>
    </source>
</reference>
<reference key="2">
    <citation type="journal article" date="2006" name="Nat. Biotechnol.">
        <title>ORFeome cloning and global analysis of protein localization in the fission yeast Schizosaccharomyces pombe.</title>
        <authorList>
            <person name="Matsuyama A."/>
            <person name="Arai R."/>
            <person name="Yashiroda Y."/>
            <person name="Shirai A."/>
            <person name="Kamata A."/>
            <person name="Sekido S."/>
            <person name="Kobayashi Y."/>
            <person name="Hashimoto A."/>
            <person name="Hamamoto M."/>
            <person name="Hiraoka Y."/>
            <person name="Horinouchi S."/>
            <person name="Yoshida M."/>
        </authorList>
    </citation>
    <scope>SUBCELLULAR LOCATION [LARGE SCALE ANALYSIS]</scope>
</reference>
<gene>
    <name type="primary">mef1</name>
    <name type="ORF">SPBC1306.01c</name>
    <name type="ORF">SPBC409.22c</name>
</gene>
<evidence type="ECO:0000255" key="1">
    <source>
        <dbReference type="HAMAP-Rule" id="MF_03061"/>
    </source>
</evidence>
<evidence type="ECO:0000269" key="2">
    <source>
    </source>
</evidence>
<evidence type="ECO:0000305" key="3"/>
<accession>Q9USZ1</accession>
<accession>Q9UUA3</accession>
<dbReference type="EMBL" id="CU329671">
    <property type="protein sequence ID" value="CAB52624.2"/>
    <property type="molecule type" value="Genomic_DNA"/>
</dbReference>
<dbReference type="PIR" id="T50308">
    <property type="entry name" value="T50308"/>
</dbReference>
<dbReference type="RefSeq" id="NP_595472.2">
    <property type="nucleotide sequence ID" value="NM_001021382.3"/>
</dbReference>
<dbReference type="SMR" id="Q9USZ1"/>
<dbReference type="BioGRID" id="276327">
    <property type="interactions" value="11"/>
</dbReference>
<dbReference type="FunCoup" id="Q9USZ1">
    <property type="interactions" value="408"/>
</dbReference>
<dbReference type="STRING" id="284812.Q9USZ1"/>
<dbReference type="iPTMnet" id="Q9USZ1"/>
<dbReference type="PaxDb" id="4896-SPBC1306.01c.1"/>
<dbReference type="EnsemblFungi" id="SPBC1306.01c.1">
    <property type="protein sequence ID" value="SPBC1306.01c.1:pep"/>
    <property type="gene ID" value="SPBC1306.01c"/>
</dbReference>
<dbReference type="GeneID" id="2539776"/>
<dbReference type="KEGG" id="spo:2539776"/>
<dbReference type="PomBase" id="SPBC1306.01c">
    <property type="gene designation" value="mef1"/>
</dbReference>
<dbReference type="VEuPathDB" id="FungiDB:SPBC1306.01c"/>
<dbReference type="eggNOG" id="KOG0462">
    <property type="taxonomic scope" value="Eukaryota"/>
</dbReference>
<dbReference type="eggNOG" id="KOG0465">
    <property type="taxonomic scope" value="Eukaryota"/>
</dbReference>
<dbReference type="HOGENOM" id="CLU_002794_4_0_1"/>
<dbReference type="InParanoid" id="Q9USZ1"/>
<dbReference type="OMA" id="GQFAKVQ"/>
<dbReference type="PhylomeDB" id="Q9USZ1"/>
<dbReference type="UniPathway" id="UPA00345"/>
<dbReference type="PRO" id="PR:Q9USZ1"/>
<dbReference type="Proteomes" id="UP000002485">
    <property type="component" value="Chromosome II"/>
</dbReference>
<dbReference type="GO" id="GO:0005759">
    <property type="term" value="C:mitochondrial matrix"/>
    <property type="evidence" value="ECO:0000305"/>
    <property type="project" value="PomBase"/>
</dbReference>
<dbReference type="GO" id="GO:0005739">
    <property type="term" value="C:mitochondrion"/>
    <property type="evidence" value="ECO:0007005"/>
    <property type="project" value="PomBase"/>
</dbReference>
<dbReference type="GO" id="GO:0005525">
    <property type="term" value="F:GTP binding"/>
    <property type="evidence" value="ECO:0000255"/>
    <property type="project" value="PomBase"/>
</dbReference>
<dbReference type="GO" id="GO:0003924">
    <property type="term" value="F:GTPase activity"/>
    <property type="evidence" value="ECO:0000318"/>
    <property type="project" value="GO_Central"/>
</dbReference>
<dbReference type="GO" id="GO:0003746">
    <property type="term" value="F:translation elongation factor activity"/>
    <property type="evidence" value="ECO:0000318"/>
    <property type="project" value="GO_Central"/>
</dbReference>
<dbReference type="GO" id="GO:0070125">
    <property type="term" value="P:mitochondrial translational elongation"/>
    <property type="evidence" value="ECO:0000318"/>
    <property type="project" value="GO_Central"/>
</dbReference>
<dbReference type="CDD" id="cd01886">
    <property type="entry name" value="EF-G"/>
    <property type="match status" value="1"/>
</dbReference>
<dbReference type="CDD" id="cd16262">
    <property type="entry name" value="EFG_III"/>
    <property type="match status" value="1"/>
</dbReference>
<dbReference type="CDD" id="cd01434">
    <property type="entry name" value="EFG_mtEFG1_IV"/>
    <property type="match status" value="1"/>
</dbReference>
<dbReference type="CDD" id="cd04097">
    <property type="entry name" value="mtEFG1_C"/>
    <property type="match status" value="1"/>
</dbReference>
<dbReference type="CDD" id="cd04091">
    <property type="entry name" value="mtEFG1_II_like"/>
    <property type="match status" value="1"/>
</dbReference>
<dbReference type="FunFam" id="3.30.230.10:FF:000003">
    <property type="entry name" value="Elongation factor G"/>
    <property type="match status" value="1"/>
</dbReference>
<dbReference type="FunFam" id="3.30.70.870:FF:000001">
    <property type="entry name" value="Elongation factor G"/>
    <property type="match status" value="1"/>
</dbReference>
<dbReference type="FunFam" id="2.40.30.10:FF:000022">
    <property type="entry name" value="Elongation factor G, mitochondrial"/>
    <property type="match status" value="1"/>
</dbReference>
<dbReference type="FunFam" id="3.30.70.240:FF:000015">
    <property type="entry name" value="Elongation factor G, mitochondrial"/>
    <property type="match status" value="1"/>
</dbReference>
<dbReference type="FunFam" id="3.40.50.300:FF:000558">
    <property type="entry name" value="Elongation factor G, mitochondrial"/>
    <property type="match status" value="1"/>
</dbReference>
<dbReference type="Gene3D" id="3.30.230.10">
    <property type="match status" value="1"/>
</dbReference>
<dbReference type="Gene3D" id="3.30.70.240">
    <property type="match status" value="1"/>
</dbReference>
<dbReference type="Gene3D" id="3.30.70.870">
    <property type="entry name" value="Elongation Factor G (Translational Gtpase), domain 3"/>
    <property type="match status" value="1"/>
</dbReference>
<dbReference type="Gene3D" id="3.40.50.300">
    <property type="entry name" value="P-loop containing nucleotide triphosphate hydrolases"/>
    <property type="match status" value="1"/>
</dbReference>
<dbReference type="Gene3D" id="2.40.30.10">
    <property type="entry name" value="Translation factors"/>
    <property type="match status" value="1"/>
</dbReference>
<dbReference type="HAMAP" id="MF_00054_B">
    <property type="entry name" value="EF_G_EF_2_B"/>
    <property type="match status" value="1"/>
</dbReference>
<dbReference type="InterPro" id="IPR041095">
    <property type="entry name" value="EFG_II"/>
</dbReference>
<dbReference type="InterPro" id="IPR009022">
    <property type="entry name" value="EFG_III"/>
</dbReference>
<dbReference type="InterPro" id="IPR035647">
    <property type="entry name" value="EFG_III/V"/>
</dbReference>
<dbReference type="InterPro" id="IPR047872">
    <property type="entry name" value="EFG_IV"/>
</dbReference>
<dbReference type="InterPro" id="IPR035649">
    <property type="entry name" value="EFG_V"/>
</dbReference>
<dbReference type="InterPro" id="IPR000640">
    <property type="entry name" value="EFG_V-like"/>
</dbReference>
<dbReference type="InterPro" id="IPR004161">
    <property type="entry name" value="EFTu-like_2"/>
</dbReference>
<dbReference type="InterPro" id="IPR031157">
    <property type="entry name" value="G_TR_CS"/>
</dbReference>
<dbReference type="InterPro" id="IPR027417">
    <property type="entry name" value="P-loop_NTPase"/>
</dbReference>
<dbReference type="InterPro" id="IPR020568">
    <property type="entry name" value="Ribosomal_Su5_D2-typ_SF"/>
</dbReference>
<dbReference type="InterPro" id="IPR014721">
    <property type="entry name" value="Ribsml_uS5_D2-typ_fold_subgr"/>
</dbReference>
<dbReference type="InterPro" id="IPR005225">
    <property type="entry name" value="Small_GTP-bd"/>
</dbReference>
<dbReference type="InterPro" id="IPR000795">
    <property type="entry name" value="T_Tr_GTP-bd_dom"/>
</dbReference>
<dbReference type="InterPro" id="IPR009000">
    <property type="entry name" value="Transl_B-barrel_sf"/>
</dbReference>
<dbReference type="InterPro" id="IPR004540">
    <property type="entry name" value="Transl_elong_EFG/EF2"/>
</dbReference>
<dbReference type="InterPro" id="IPR005517">
    <property type="entry name" value="Transl_elong_EFG/EF2_IV"/>
</dbReference>
<dbReference type="NCBIfam" id="TIGR00484">
    <property type="entry name" value="EF-G"/>
    <property type="match status" value="1"/>
</dbReference>
<dbReference type="NCBIfam" id="NF009381">
    <property type="entry name" value="PRK12740.1-5"/>
    <property type="match status" value="1"/>
</dbReference>
<dbReference type="NCBIfam" id="TIGR00231">
    <property type="entry name" value="small_GTP"/>
    <property type="match status" value="1"/>
</dbReference>
<dbReference type="PANTHER" id="PTHR43636">
    <property type="entry name" value="ELONGATION FACTOR G, MITOCHONDRIAL"/>
    <property type="match status" value="1"/>
</dbReference>
<dbReference type="PANTHER" id="PTHR43636:SF2">
    <property type="entry name" value="ELONGATION FACTOR G, MITOCHONDRIAL"/>
    <property type="match status" value="1"/>
</dbReference>
<dbReference type="Pfam" id="PF00679">
    <property type="entry name" value="EFG_C"/>
    <property type="match status" value="1"/>
</dbReference>
<dbReference type="Pfam" id="PF14492">
    <property type="entry name" value="EFG_III"/>
    <property type="match status" value="1"/>
</dbReference>
<dbReference type="Pfam" id="PF03764">
    <property type="entry name" value="EFG_IV"/>
    <property type="match status" value="1"/>
</dbReference>
<dbReference type="Pfam" id="PF00009">
    <property type="entry name" value="GTP_EFTU"/>
    <property type="match status" value="1"/>
</dbReference>
<dbReference type="Pfam" id="PF03144">
    <property type="entry name" value="GTP_EFTU_D2"/>
    <property type="match status" value="1"/>
</dbReference>
<dbReference type="PRINTS" id="PR00315">
    <property type="entry name" value="ELONGATNFCT"/>
</dbReference>
<dbReference type="SMART" id="SM00838">
    <property type="entry name" value="EFG_C"/>
    <property type="match status" value="1"/>
</dbReference>
<dbReference type="SMART" id="SM00889">
    <property type="entry name" value="EFG_IV"/>
    <property type="match status" value="1"/>
</dbReference>
<dbReference type="SUPFAM" id="SSF54980">
    <property type="entry name" value="EF-G C-terminal domain-like"/>
    <property type="match status" value="2"/>
</dbReference>
<dbReference type="SUPFAM" id="SSF52540">
    <property type="entry name" value="P-loop containing nucleoside triphosphate hydrolases"/>
    <property type="match status" value="1"/>
</dbReference>
<dbReference type="SUPFAM" id="SSF54211">
    <property type="entry name" value="Ribosomal protein S5 domain 2-like"/>
    <property type="match status" value="1"/>
</dbReference>
<dbReference type="SUPFAM" id="SSF50447">
    <property type="entry name" value="Translation proteins"/>
    <property type="match status" value="1"/>
</dbReference>
<dbReference type="PROSITE" id="PS00301">
    <property type="entry name" value="G_TR_1"/>
    <property type="match status" value="1"/>
</dbReference>
<dbReference type="PROSITE" id="PS51722">
    <property type="entry name" value="G_TR_2"/>
    <property type="match status" value="1"/>
</dbReference>
<name>EFGM_SCHPO</name>
<protein>
    <recommendedName>
        <fullName evidence="1">Elongation factor G, mitochondrial</fullName>
        <shortName evidence="1">EF-Gmt</shortName>
    </recommendedName>
    <alternativeName>
        <fullName evidence="1">Elongation factor G 1, mitochondrial</fullName>
        <shortName evidence="1">mEF-G 1</shortName>
    </alternativeName>
    <alternativeName>
        <fullName evidence="1">Elongation factor G1</fullName>
    </alternativeName>
</protein>